<gene>
    <name type="primary">Arl8a</name>
    <name type="synonym">Arl10b</name>
    <name type="synonym">Gie2</name>
</gene>
<sequence length="186" mass="21390">MIALFNKLLDWFKALFWKEEMELTLVGLQYSGKTTFVNVIASGQFNEDMIPTVGFNMRKITKGNVTIKLWDIGGQPRFRSMWERYCRGVSAIVYMVDAADQEKIEASKNELHNLLDKPQLQGIPVLVLGNKRDLAGALDEKELIEKMNLSAIQDREICCYSISCKEKDNIDITLQWLIQHSKSRRS</sequence>
<name>ARL8A_MOUSE</name>
<organism>
    <name type="scientific">Mus musculus</name>
    <name type="common">Mouse</name>
    <dbReference type="NCBI Taxonomy" id="10090"/>
    <lineage>
        <taxon>Eukaryota</taxon>
        <taxon>Metazoa</taxon>
        <taxon>Chordata</taxon>
        <taxon>Craniata</taxon>
        <taxon>Vertebrata</taxon>
        <taxon>Euteleostomi</taxon>
        <taxon>Mammalia</taxon>
        <taxon>Eutheria</taxon>
        <taxon>Euarchontoglires</taxon>
        <taxon>Glires</taxon>
        <taxon>Rodentia</taxon>
        <taxon>Myomorpha</taxon>
        <taxon>Muroidea</taxon>
        <taxon>Muridae</taxon>
        <taxon>Murinae</taxon>
        <taxon>Mus</taxon>
        <taxon>Mus</taxon>
    </lineage>
</organism>
<keyword id="KW-0131">Cell cycle</keyword>
<keyword id="KW-0132">Cell division</keyword>
<keyword id="KW-0966">Cell projection</keyword>
<keyword id="KW-0159">Chromosome partition</keyword>
<keyword id="KW-0963">Cytoplasm</keyword>
<keyword id="KW-0206">Cytoskeleton</keyword>
<keyword id="KW-0967">Endosome</keyword>
<keyword id="KW-0342">GTP-binding</keyword>
<keyword id="KW-0458">Lysosome</keyword>
<keyword id="KW-0472">Membrane</keyword>
<keyword id="KW-0498">Mitosis</keyword>
<keyword id="KW-0547">Nucleotide-binding</keyword>
<keyword id="KW-0653">Protein transport</keyword>
<keyword id="KW-1185">Reference proteome</keyword>
<keyword id="KW-0770">Synapse</keyword>
<keyword id="KW-0813">Transport</keyword>
<feature type="chain" id="PRO_0000232917" description="ADP-ribosylation factor-like protein 8A">
    <location>
        <begin position="1"/>
        <end position="186"/>
    </location>
</feature>
<feature type="intramembrane region" description="Note=Mediates targeting to membranes" evidence="1">
    <location>
        <begin position="1"/>
        <end position="19"/>
    </location>
</feature>
<feature type="binding site" evidence="1">
    <location>
        <begin position="29"/>
        <end position="35"/>
    </location>
    <ligand>
        <name>GTP</name>
        <dbReference type="ChEBI" id="CHEBI:37565"/>
    </ligand>
</feature>
<feature type="binding site" evidence="1">
    <location>
        <begin position="71"/>
        <end position="75"/>
    </location>
    <ligand>
        <name>GTP</name>
        <dbReference type="ChEBI" id="CHEBI:37565"/>
    </ligand>
</feature>
<feature type="binding site" evidence="1">
    <location>
        <begin position="130"/>
        <end position="133"/>
    </location>
    <ligand>
        <name>GTP</name>
        <dbReference type="ChEBI" id="CHEBI:37565"/>
    </ligand>
</feature>
<proteinExistence type="evidence at protein level"/>
<dbReference type="EMBL" id="AB185207">
    <property type="protein sequence ID" value="BAD30091.1"/>
    <property type="molecule type" value="mRNA"/>
</dbReference>
<dbReference type="EMBL" id="BC004035">
    <property type="protein sequence ID" value="AAH04035.1"/>
    <property type="molecule type" value="mRNA"/>
</dbReference>
<dbReference type="EMBL" id="BC018479">
    <property type="protein sequence ID" value="AAH18479.1"/>
    <property type="molecule type" value="mRNA"/>
</dbReference>
<dbReference type="EMBL" id="AK004080">
    <property type="protein sequence ID" value="BAB23160.1"/>
    <property type="molecule type" value="mRNA"/>
</dbReference>
<dbReference type="CCDS" id="CCDS15316.1"/>
<dbReference type="RefSeq" id="NP_081099.1">
    <property type="nucleotide sequence ID" value="NM_026823.2"/>
</dbReference>
<dbReference type="SMR" id="Q8VEH3"/>
<dbReference type="BioGRID" id="213014">
    <property type="interactions" value="6"/>
</dbReference>
<dbReference type="FunCoup" id="Q8VEH3">
    <property type="interactions" value="1170"/>
</dbReference>
<dbReference type="IntAct" id="Q8VEH3">
    <property type="interactions" value="2"/>
</dbReference>
<dbReference type="STRING" id="10090.ENSMUSP00000027684"/>
<dbReference type="GlyGen" id="Q8VEH3">
    <property type="glycosylation" value="1 site, 1 N-linked glycan (1 site)"/>
</dbReference>
<dbReference type="iPTMnet" id="Q8VEH3"/>
<dbReference type="MetOSite" id="Q8VEH3"/>
<dbReference type="PhosphoSitePlus" id="Q8VEH3"/>
<dbReference type="SwissPalm" id="Q8VEH3"/>
<dbReference type="jPOST" id="Q8VEH3"/>
<dbReference type="PaxDb" id="10090-ENSMUSP00000027684"/>
<dbReference type="PeptideAtlas" id="Q8VEH3"/>
<dbReference type="ProteomicsDB" id="282020"/>
<dbReference type="Pumba" id="Q8VEH3"/>
<dbReference type="TopDownProteomics" id="Q8VEH3"/>
<dbReference type="Antibodypedia" id="34522">
    <property type="antibodies" value="223 antibodies from 23 providers"/>
</dbReference>
<dbReference type="DNASU" id="68724"/>
<dbReference type="Ensembl" id="ENSMUST00000027684.11">
    <property type="protein sequence ID" value="ENSMUSP00000027684.5"/>
    <property type="gene ID" value="ENSMUSG00000026426.11"/>
</dbReference>
<dbReference type="GeneID" id="68724"/>
<dbReference type="KEGG" id="mmu:68724"/>
<dbReference type="UCSC" id="uc007csu.1">
    <property type="organism name" value="mouse"/>
</dbReference>
<dbReference type="AGR" id="MGI:1915974"/>
<dbReference type="CTD" id="127829"/>
<dbReference type="MGI" id="MGI:1915974">
    <property type="gene designation" value="Arl8a"/>
</dbReference>
<dbReference type="VEuPathDB" id="HostDB:ENSMUSG00000026426"/>
<dbReference type="eggNOG" id="KOG0075">
    <property type="taxonomic scope" value="Eukaryota"/>
</dbReference>
<dbReference type="GeneTree" id="ENSGT00940000159657"/>
<dbReference type="HOGENOM" id="CLU_040729_10_0_1"/>
<dbReference type="InParanoid" id="Q8VEH3"/>
<dbReference type="OMA" id="RFRSEWG"/>
<dbReference type="OrthoDB" id="2011769at2759"/>
<dbReference type="PhylomeDB" id="Q8VEH3"/>
<dbReference type="TreeFam" id="TF105470"/>
<dbReference type="Reactome" id="R-MMU-6798695">
    <property type="pathway name" value="Neutrophil degranulation"/>
</dbReference>
<dbReference type="BioGRID-ORCS" id="68724">
    <property type="hits" value="0 hits in 78 CRISPR screens"/>
</dbReference>
<dbReference type="CD-CODE" id="CE726F99">
    <property type="entry name" value="Postsynaptic density"/>
</dbReference>
<dbReference type="ChiTaRS" id="Arl8a">
    <property type="organism name" value="mouse"/>
</dbReference>
<dbReference type="PRO" id="PR:Q8VEH3"/>
<dbReference type="Proteomes" id="UP000000589">
    <property type="component" value="Chromosome 1"/>
</dbReference>
<dbReference type="RNAct" id="Q8VEH3">
    <property type="molecule type" value="protein"/>
</dbReference>
<dbReference type="Bgee" id="ENSMUSG00000026426">
    <property type="expression patterns" value="Expressed in cortical plate and 253 other cell types or tissues"/>
</dbReference>
<dbReference type="ExpressionAtlas" id="Q8VEH3">
    <property type="expression patterns" value="baseline and differential"/>
</dbReference>
<dbReference type="GO" id="GO:1904115">
    <property type="term" value="C:axon cytoplasm"/>
    <property type="evidence" value="ECO:0007669"/>
    <property type="project" value="GOC"/>
</dbReference>
<dbReference type="GO" id="GO:0031902">
    <property type="term" value="C:late endosome membrane"/>
    <property type="evidence" value="ECO:0007669"/>
    <property type="project" value="UniProtKB-SubCell"/>
</dbReference>
<dbReference type="GO" id="GO:0005765">
    <property type="term" value="C:lysosomal membrane"/>
    <property type="evidence" value="ECO:0007669"/>
    <property type="project" value="UniProtKB-SubCell"/>
</dbReference>
<dbReference type="GO" id="GO:0030496">
    <property type="term" value="C:midbody"/>
    <property type="evidence" value="ECO:0007669"/>
    <property type="project" value="Ensembl"/>
</dbReference>
<dbReference type="GO" id="GO:0051233">
    <property type="term" value="C:spindle midzone"/>
    <property type="evidence" value="ECO:0007669"/>
    <property type="project" value="Ensembl"/>
</dbReference>
<dbReference type="GO" id="GO:0045202">
    <property type="term" value="C:synapse"/>
    <property type="evidence" value="ECO:0007669"/>
    <property type="project" value="UniProtKB-SubCell"/>
</dbReference>
<dbReference type="GO" id="GO:0005525">
    <property type="term" value="F:GTP binding"/>
    <property type="evidence" value="ECO:0007669"/>
    <property type="project" value="UniProtKB-KW"/>
</dbReference>
<dbReference type="GO" id="GO:0003924">
    <property type="term" value="F:GTPase activity"/>
    <property type="evidence" value="ECO:0007669"/>
    <property type="project" value="InterPro"/>
</dbReference>
<dbReference type="GO" id="GO:0008089">
    <property type="term" value="P:anterograde axonal transport"/>
    <property type="evidence" value="ECO:0000314"/>
    <property type="project" value="UniProtKB"/>
</dbReference>
<dbReference type="GO" id="GO:0051301">
    <property type="term" value="P:cell division"/>
    <property type="evidence" value="ECO:0007669"/>
    <property type="project" value="UniProtKB-KW"/>
</dbReference>
<dbReference type="GO" id="GO:0007059">
    <property type="term" value="P:chromosome segregation"/>
    <property type="evidence" value="ECO:0007669"/>
    <property type="project" value="UniProtKB-KW"/>
</dbReference>
<dbReference type="GO" id="GO:0015031">
    <property type="term" value="P:protein transport"/>
    <property type="evidence" value="ECO:0007669"/>
    <property type="project" value="UniProtKB-KW"/>
</dbReference>
<dbReference type="CDD" id="cd04159">
    <property type="entry name" value="Arl10_like"/>
    <property type="match status" value="1"/>
</dbReference>
<dbReference type="FunFam" id="3.40.50.300:FF:000247">
    <property type="entry name" value="ADP-ribosylation factor-like GTPase 8A"/>
    <property type="match status" value="1"/>
</dbReference>
<dbReference type="Gene3D" id="3.40.50.300">
    <property type="entry name" value="P-loop containing nucleotide triphosphate hydrolases"/>
    <property type="match status" value="1"/>
</dbReference>
<dbReference type="InterPro" id="IPR044154">
    <property type="entry name" value="Arl8a/8b"/>
</dbReference>
<dbReference type="InterPro" id="IPR027417">
    <property type="entry name" value="P-loop_NTPase"/>
</dbReference>
<dbReference type="InterPro" id="IPR005225">
    <property type="entry name" value="Small_GTP-bd"/>
</dbReference>
<dbReference type="InterPro" id="IPR006689">
    <property type="entry name" value="Small_GTPase_ARF/SAR"/>
</dbReference>
<dbReference type="NCBIfam" id="TIGR00231">
    <property type="entry name" value="small_GTP"/>
    <property type="match status" value="1"/>
</dbReference>
<dbReference type="PANTHER" id="PTHR45732">
    <property type="entry name" value="ADP-RIBOSYLATION FACTOR-LIKE PROTEIN 8"/>
    <property type="match status" value="1"/>
</dbReference>
<dbReference type="PANTHER" id="PTHR45732:SF4">
    <property type="entry name" value="ADP-RIBOSYLATION FACTOR-LIKE PROTEIN 8A"/>
    <property type="match status" value="1"/>
</dbReference>
<dbReference type="Pfam" id="PF00025">
    <property type="entry name" value="Arf"/>
    <property type="match status" value="1"/>
</dbReference>
<dbReference type="PRINTS" id="PR00328">
    <property type="entry name" value="SAR1GTPBP"/>
</dbReference>
<dbReference type="SMART" id="SM00177">
    <property type="entry name" value="ARF"/>
    <property type="match status" value="1"/>
</dbReference>
<dbReference type="SMART" id="SM00175">
    <property type="entry name" value="RAB"/>
    <property type="match status" value="1"/>
</dbReference>
<dbReference type="SMART" id="SM00178">
    <property type="entry name" value="SAR"/>
    <property type="match status" value="1"/>
</dbReference>
<dbReference type="SUPFAM" id="SSF52540">
    <property type="entry name" value="P-loop containing nucleoside triphosphate hydrolases"/>
    <property type="match status" value="1"/>
</dbReference>
<dbReference type="PROSITE" id="PS51417">
    <property type="entry name" value="ARF"/>
    <property type="match status" value="1"/>
</dbReference>
<reference key="1">
    <citation type="journal article" date="2004" name="J. Cell Sci.">
        <title>Novel small GTPase subfamily capable of associating with tubulin is required for chromosome segregation.</title>
        <authorList>
            <person name="Okai T."/>
            <person name="Araki Y."/>
            <person name="Tada M."/>
            <person name="Tateno T."/>
            <person name="Kontani K."/>
            <person name="Katada T."/>
        </authorList>
    </citation>
    <scope>NUCLEOTIDE SEQUENCE [MRNA]</scope>
</reference>
<reference key="2">
    <citation type="journal article" date="2004" name="Genome Res.">
        <title>The status, quality, and expansion of the NIH full-length cDNA project: the Mammalian Gene Collection (MGC).</title>
        <authorList>
            <consortium name="The MGC Project Team"/>
        </authorList>
    </citation>
    <scope>NUCLEOTIDE SEQUENCE [LARGE SCALE MRNA]</scope>
    <source>
        <strain>Czech II</strain>
        <tissue>Mammary tumor</tissue>
    </source>
</reference>
<reference key="3">
    <citation type="journal article" date="2005" name="Science">
        <title>The transcriptional landscape of the mammalian genome.</title>
        <authorList>
            <person name="Carninci P."/>
            <person name="Kasukawa T."/>
            <person name="Katayama S."/>
            <person name="Gough J."/>
            <person name="Frith M.C."/>
            <person name="Maeda N."/>
            <person name="Oyama R."/>
            <person name="Ravasi T."/>
            <person name="Lenhard B."/>
            <person name="Wells C."/>
            <person name="Kodzius R."/>
            <person name="Shimokawa K."/>
            <person name="Bajic V.B."/>
            <person name="Brenner S.E."/>
            <person name="Batalov S."/>
            <person name="Forrest A.R."/>
            <person name="Zavolan M."/>
            <person name="Davis M.J."/>
            <person name="Wilming L.G."/>
            <person name="Aidinis V."/>
            <person name="Allen J.E."/>
            <person name="Ambesi-Impiombato A."/>
            <person name="Apweiler R."/>
            <person name="Aturaliya R.N."/>
            <person name="Bailey T.L."/>
            <person name="Bansal M."/>
            <person name="Baxter L."/>
            <person name="Beisel K.W."/>
            <person name="Bersano T."/>
            <person name="Bono H."/>
            <person name="Chalk A.M."/>
            <person name="Chiu K.P."/>
            <person name="Choudhary V."/>
            <person name="Christoffels A."/>
            <person name="Clutterbuck D.R."/>
            <person name="Crowe M.L."/>
            <person name="Dalla E."/>
            <person name="Dalrymple B.P."/>
            <person name="de Bono B."/>
            <person name="Della Gatta G."/>
            <person name="di Bernardo D."/>
            <person name="Down T."/>
            <person name="Engstrom P."/>
            <person name="Fagiolini M."/>
            <person name="Faulkner G."/>
            <person name="Fletcher C.F."/>
            <person name="Fukushima T."/>
            <person name="Furuno M."/>
            <person name="Futaki S."/>
            <person name="Gariboldi M."/>
            <person name="Georgii-Hemming P."/>
            <person name="Gingeras T.R."/>
            <person name="Gojobori T."/>
            <person name="Green R.E."/>
            <person name="Gustincich S."/>
            <person name="Harbers M."/>
            <person name="Hayashi Y."/>
            <person name="Hensch T.K."/>
            <person name="Hirokawa N."/>
            <person name="Hill D."/>
            <person name="Huminiecki L."/>
            <person name="Iacono M."/>
            <person name="Ikeo K."/>
            <person name="Iwama A."/>
            <person name="Ishikawa T."/>
            <person name="Jakt M."/>
            <person name="Kanapin A."/>
            <person name="Katoh M."/>
            <person name="Kawasawa Y."/>
            <person name="Kelso J."/>
            <person name="Kitamura H."/>
            <person name="Kitano H."/>
            <person name="Kollias G."/>
            <person name="Krishnan S.P."/>
            <person name="Kruger A."/>
            <person name="Kummerfeld S.K."/>
            <person name="Kurochkin I.V."/>
            <person name="Lareau L.F."/>
            <person name="Lazarevic D."/>
            <person name="Lipovich L."/>
            <person name="Liu J."/>
            <person name="Liuni S."/>
            <person name="McWilliam S."/>
            <person name="Madan Babu M."/>
            <person name="Madera M."/>
            <person name="Marchionni L."/>
            <person name="Matsuda H."/>
            <person name="Matsuzawa S."/>
            <person name="Miki H."/>
            <person name="Mignone F."/>
            <person name="Miyake S."/>
            <person name="Morris K."/>
            <person name="Mottagui-Tabar S."/>
            <person name="Mulder N."/>
            <person name="Nakano N."/>
            <person name="Nakauchi H."/>
            <person name="Ng P."/>
            <person name="Nilsson R."/>
            <person name="Nishiguchi S."/>
            <person name="Nishikawa S."/>
            <person name="Nori F."/>
            <person name="Ohara O."/>
            <person name="Okazaki Y."/>
            <person name="Orlando V."/>
            <person name="Pang K.C."/>
            <person name="Pavan W.J."/>
            <person name="Pavesi G."/>
            <person name="Pesole G."/>
            <person name="Petrovsky N."/>
            <person name="Piazza S."/>
            <person name="Reed J."/>
            <person name="Reid J.F."/>
            <person name="Ring B.Z."/>
            <person name="Ringwald M."/>
            <person name="Rost B."/>
            <person name="Ruan Y."/>
            <person name="Salzberg S.L."/>
            <person name="Sandelin A."/>
            <person name="Schneider C."/>
            <person name="Schoenbach C."/>
            <person name="Sekiguchi K."/>
            <person name="Semple C.A."/>
            <person name="Seno S."/>
            <person name="Sessa L."/>
            <person name="Sheng Y."/>
            <person name="Shibata Y."/>
            <person name="Shimada H."/>
            <person name="Shimada K."/>
            <person name="Silva D."/>
            <person name="Sinclair B."/>
            <person name="Sperling S."/>
            <person name="Stupka E."/>
            <person name="Sugiura K."/>
            <person name="Sultana R."/>
            <person name="Takenaka Y."/>
            <person name="Taki K."/>
            <person name="Tammoja K."/>
            <person name="Tan S.L."/>
            <person name="Tang S."/>
            <person name="Taylor M.S."/>
            <person name="Tegner J."/>
            <person name="Teichmann S.A."/>
            <person name="Ueda H.R."/>
            <person name="van Nimwegen E."/>
            <person name="Verardo R."/>
            <person name="Wei C.L."/>
            <person name="Yagi K."/>
            <person name="Yamanishi H."/>
            <person name="Zabarovsky E."/>
            <person name="Zhu S."/>
            <person name="Zimmer A."/>
            <person name="Hide W."/>
            <person name="Bult C."/>
            <person name="Grimmond S.M."/>
            <person name="Teasdale R.D."/>
            <person name="Liu E.T."/>
            <person name="Brusic V."/>
            <person name="Quackenbush J."/>
            <person name="Wahlestedt C."/>
            <person name="Mattick J.S."/>
            <person name="Hume D.A."/>
            <person name="Kai C."/>
            <person name="Sasaki D."/>
            <person name="Tomaru Y."/>
            <person name="Fukuda S."/>
            <person name="Kanamori-Katayama M."/>
            <person name="Suzuki M."/>
            <person name="Aoki J."/>
            <person name="Arakawa T."/>
            <person name="Iida J."/>
            <person name="Imamura K."/>
            <person name="Itoh M."/>
            <person name="Kato T."/>
            <person name="Kawaji H."/>
            <person name="Kawagashira N."/>
            <person name="Kawashima T."/>
            <person name="Kojima M."/>
            <person name="Kondo S."/>
            <person name="Konno H."/>
            <person name="Nakano K."/>
            <person name="Ninomiya N."/>
            <person name="Nishio T."/>
            <person name="Okada M."/>
            <person name="Plessy C."/>
            <person name="Shibata K."/>
            <person name="Shiraki T."/>
            <person name="Suzuki S."/>
            <person name="Tagami M."/>
            <person name="Waki K."/>
            <person name="Watahiki A."/>
            <person name="Okamura-Oho Y."/>
            <person name="Suzuki H."/>
            <person name="Kawai J."/>
            <person name="Hayashizaki Y."/>
        </authorList>
    </citation>
    <scope>NUCLEOTIDE SEQUENCE [LARGE SCALE MRNA] OF 111-186</scope>
    <source>
        <strain>C57BL/6J</strain>
        <tissue>Embryo</tissue>
    </source>
</reference>
<reference key="4">
    <citation type="journal article" date="2010" name="Cell">
        <title>A tissue-specific atlas of mouse protein phosphorylation and expression.</title>
        <authorList>
            <person name="Huttlin E.L."/>
            <person name="Jedrychowski M.P."/>
            <person name="Elias J.E."/>
            <person name="Goswami T."/>
            <person name="Rad R."/>
            <person name="Beausoleil S.A."/>
            <person name="Villen J."/>
            <person name="Haas W."/>
            <person name="Sowa M.E."/>
            <person name="Gygi S.P."/>
        </authorList>
    </citation>
    <scope>IDENTIFICATION BY MASS SPECTROMETRY [LARGE SCALE ANALYSIS]</scope>
    <source>
        <tissue>Brain</tissue>
        <tissue>Kidney</tissue>
        <tissue>Liver</tissue>
        <tissue>Lung</tissue>
        <tissue>Spleen</tissue>
        <tissue>Testis</tissue>
    </source>
</reference>
<reference key="5">
    <citation type="journal article" date="2018" name="Neuron">
        <title>Presynaptic Biogenesis Requires Axonal Transport of Lysosome-Related Vesicles.</title>
        <authorList>
            <person name="Vukoja A."/>
            <person name="Rey U."/>
            <person name="Petzoldt A.G."/>
            <person name="Ott C."/>
            <person name="Vollweiter D."/>
            <person name="Quentin C."/>
            <person name="Puchkov D."/>
            <person name="Reynolds E."/>
            <person name="Lehmann M."/>
            <person name="Hohensee S."/>
            <person name="Rosa S."/>
            <person name="Lipowsky R."/>
            <person name="Sigrist S.J."/>
            <person name="Haucke V."/>
        </authorList>
    </citation>
    <scope>FUNCTION</scope>
</reference>
<comment type="function">
    <text evidence="4 5">Plays a role in lysosomes motility (PubMed:30174114). In neurons, mediates the anterograde axonal long-range transport of presynaptic lysosome-related vesicles required for presynaptic biogenesis and synaptic function (PubMed:30174114). May play a role in chromosome segregation (By similarity).</text>
</comment>
<comment type="subunit">
    <text evidence="2">Interacts with PLEKHM1. When GTP-bound, interacts with RUFY3 and RUFY4, but not with RUFY1, nor RUFY2 (By similarity).</text>
</comment>
<comment type="subcellular location">
    <subcellularLocation>
        <location evidence="4">Late endosome membrane</location>
    </subcellularLocation>
    <subcellularLocation>
        <location evidence="3">Lysosome membrane</location>
    </subcellularLocation>
    <subcellularLocation>
        <location evidence="4">Cytoplasm</location>
        <location evidence="4">Cytoskeleton</location>
        <location evidence="4">Spindle</location>
    </subcellularLocation>
    <subcellularLocation>
        <location evidence="3">Cell projection</location>
        <location evidence="3">Axon</location>
    </subcellularLocation>
    <subcellularLocation>
        <location evidence="3">Synapse</location>
    </subcellularLocation>
    <text evidence="4">Localizes with microtubules at the spindle mid-zone during mitosis.</text>
</comment>
<comment type="similarity">
    <text evidence="6">Belongs to the small GTPase superfamily. Arf family.</text>
</comment>
<accession>Q8VEH3</accession>
<accession>Q99KS1</accession>
<accession>Q9CTB0</accession>
<protein>
    <recommendedName>
        <fullName>ADP-ribosylation factor-like protein 8A</fullName>
    </recommendedName>
    <alternativeName>
        <fullName>ADP-ribosylation factor-like protein 10B</fullName>
    </alternativeName>
    <alternativeName>
        <fullName>Novel small G protein indispensable for equal chromosome segregation 2</fullName>
    </alternativeName>
</protein>
<evidence type="ECO:0000250" key="1"/>
<evidence type="ECO:0000250" key="2">
    <source>
        <dbReference type="UniProtKB" id="Q96BM9"/>
    </source>
</evidence>
<evidence type="ECO:0000250" key="3">
    <source>
        <dbReference type="UniProtKB" id="Q9CQW2"/>
    </source>
</evidence>
<evidence type="ECO:0000250" key="4">
    <source>
        <dbReference type="UniProtKB" id="Q9NVJ2"/>
    </source>
</evidence>
<evidence type="ECO:0000269" key="5">
    <source>
    </source>
</evidence>
<evidence type="ECO:0000305" key="6"/>